<keyword id="KW-0560">Oxidoreductase</keyword>
<keyword id="KW-1185">Reference proteome</keyword>
<proteinExistence type="inferred from homology"/>
<sequence length="477" mass="51628">MTKKVIRKPDSLHDVFERKGGSAPTATHYCAGCGHGILHKLIGEAMDELGIQERAVMISPVGCAVFAYYYFDCGNVQVAHGRAPAVGTGISRAEDDAVVILYQGDGDLASIGLNETIQAANRGEKLAVFFVNNTVYGMTGGQMAPTTLVGEVTVTCPTGRDPRYAGYPLHMCELLDNLQAPVFIERVSLADPKRIRRARRAIKRALEIQRDGKGYAFVEVLSPCPTNLRQDAEGAERFLKEEMEKEFPVKNFRDRSAETEPLIRSESDFSRESLDRIFQIREDSVPDPVDDPEFPEVRVKIAGFGGQGVLSMGLTLAQAACSEGRHTSWYPAYGPEQRGGTSSCGVVISGERVGSPAVDTPDVLVALNQPSLDEFADDVADGGIILYDSTTASFSGGAVRAMGVPALEIARKHGTARAANTVMLGVMMALGLTGLDEESFREAIKFTFAGKEKIIDMNLRILEAGAEWARENIEGEL</sequence>
<name>VORA_METTH</name>
<gene>
    <name type="primary">vorA</name>
    <name type="ordered locus">MTH_705</name>
</gene>
<accession>O26801</accession>
<comment type="catalytic activity">
    <reaction>
        <text>3-methyl-2-oxobutanoate + 2 oxidized [2Fe-2S]-[ferredoxin] + CoA = 2-methylpropanoyl-CoA + 2 reduced [2Fe-2S]-[ferredoxin] + CO2 + H(+)</text>
        <dbReference type="Rhea" id="RHEA:11712"/>
        <dbReference type="Rhea" id="RHEA-COMP:10000"/>
        <dbReference type="Rhea" id="RHEA-COMP:10001"/>
        <dbReference type="ChEBI" id="CHEBI:11851"/>
        <dbReference type="ChEBI" id="CHEBI:15378"/>
        <dbReference type="ChEBI" id="CHEBI:16526"/>
        <dbReference type="ChEBI" id="CHEBI:33737"/>
        <dbReference type="ChEBI" id="CHEBI:33738"/>
        <dbReference type="ChEBI" id="CHEBI:57287"/>
        <dbReference type="ChEBI" id="CHEBI:57338"/>
        <dbReference type="EC" id="1.2.7.7"/>
    </reaction>
</comment>
<comment type="subunit">
    <text evidence="1">Heterotrimer of the VorA, VorB and VorC subunits.</text>
</comment>
<evidence type="ECO:0000250" key="1"/>
<organism>
    <name type="scientific">Methanothermobacter thermautotrophicus (strain ATCC 29096 / DSM 1053 / JCM 10044 / NBRC 100330 / Delta H)</name>
    <name type="common">Methanobacterium thermoautotrophicum</name>
    <dbReference type="NCBI Taxonomy" id="187420"/>
    <lineage>
        <taxon>Archaea</taxon>
        <taxon>Methanobacteriati</taxon>
        <taxon>Methanobacteriota</taxon>
        <taxon>Methanomada group</taxon>
        <taxon>Methanobacteria</taxon>
        <taxon>Methanobacteriales</taxon>
        <taxon>Methanobacteriaceae</taxon>
        <taxon>Methanothermobacter</taxon>
    </lineage>
</organism>
<protein>
    <recommendedName>
        <fullName>Ketoisovalerate oxidoreductase subunit VorA</fullName>
        <shortName>VOR</shortName>
        <ecNumber>1.2.7.7</ecNumber>
    </recommendedName>
    <alternativeName>
        <fullName>2-oxoisovalerate ferredoxin reductase subunit alpha</fullName>
    </alternativeName>
    <alternativeName>
        <fullName>2-oxoisovalerate oxidoreductase alpha chain</fullName>
    </alternativeName>
</protein>
<feature type="initiator methionine" description="Removed" evidence="1">
    <location>
        <position position="1"/>
    </location>
</feature>
<feature type="chain" id="PRO_0000099949" description="Ketoisovalerate oxidoreductase subunit VorA">
    <location>
        <begin position="2"/>
        <end position="477"/>
    </location>
</feature>
<reference key="1">
    <citation type="journal article" date="1997" name="J. Bacteriol.">
        <title>Complete genome sequence of Methanobacterium thermoautotrophicum deltaH: functional analysis and comparative genomics.</title>
        <authorList>
            <person name="Smith D.R."/>
            <person name="Doucette-Stamm L.A."/>
            <person name="Deloughery C."/>
            <person name="Lee H.-M."/>
            <person name="Dubois J."/>
            <person name="Aldredge T."/>
            <person name="Bashirzadeh R."/>
            <person name="Blakely D."/>
            <person name="Cook R."/>
            <person name="Gilbert K."/>
            <person name="Harrison D."/>
            <person name="Hoang L."/>
            <person name="Keagle P."/>
            <person name="Lumm W."/>
            <person name="Pothier B."/>
            <person name="Qiu D."/>
            <person name="Spadafora R."/>
            <person name="Vicare R."/>
            <person name="Wang Y."/>
            <person name="Wierzbowski J."/>
            <person name="Gibson R."/>
            <person name="Jiwani N."/>
            <person name="Caruso A."/>
            <person name="Bush D."/>
            <person name="Safer H."/>
            <person name="Patwell D."/>
            <person name="Prabhakar S."/>
            <person name="McDougall S."/>
            <person name="Shimer G."/>
            <person name="Goyal A."/>
            <person name="Pietrovski S."/>
            <person name="Church G.M."/>
            <person name="Daniels C.J."/>
            <person name="Mao J.-I."/>
            <person name="Rice P."/>
            <person name="Noelling J."/>
            <person name="Reeve J.N."/>
        </authorList>
    </citation>
    <scope>NUCLEOTIDE SEQUENCE [LARGE SCALE GENOMIC DNA]</scope>
    <source>
        <strain>ATCC 29096 / DSM 1053 / JCM 10044 / NBRC 100330 / Delta H</strain>
    </source>
</reference>
<dbReference type="EC" id="1.2.7.7"/>
<dbReference type="EMBL" id="AE000666">
    <property type="protein sequence ID" value="AAB85210.1"/>
    <property type="molecule type" value="Genomic_DNA"/>
</dbReference>
<dbReference type="PIR" id="B69194">
    <property type="entry name" value="B69194"/>
</dbReference>
<dbReference type="SMR" id="O26801"/>
<dbReference type="STRING" id="187420.MTH_705"/>
<dbReference type="PaxDb" id="187420-MTH_705"/>
<dbReference type="EnsemblBacteria" id="AAB85210">
    <property type="protein sequence ID" value="AAB85210"/>
    <property type="gene ID" value="MTH_705"/>
</dbReference>
<dbReference type="KEGG" id="mth:MTH_705"/>
<dbReference type="PATRIC" id="fig|187420.15.peg.688"/>
<dbReference type="HOGENOM" id="CLU_042621_0_0_2"/>
<dbReference type="InParanoid" id="O26801"/>
<dbReference type="Proteomes" id="UP000005223">
    <property type="component" value="Chromosome"/>
</dbReference>
<dbReference type="GO" id="GO:0043807">
    <property type="term" value="F:3-methyl-2-oxobutanoate dehydrogenase (ferredoxin) activity"/>
    <property type="evidence" value="ECO:0007669"/>
    <property type="project" value="UniProtKB-EC"/>
</dbReference>
<dbReference type="GO" id="GO:0030976">
    <property type="term" value="F:thiamine pyrophosphate binding"/>
    <property type="evidence" value="ECO:0007669"/>
    <property type="project" value="InterPro"/>
</dbReference>
<dbReference type="GO" id="GO:0006082">
    <property type="term" value="P:organic acid metabolic process"/>
    <property type="evidence" value="ECO:0007669"/>
    <property type="project" value="UniProtKB-ARBA"/>
</dbReference>
<dbReference type="GO" id="GO:0044272">
    <property type="term" value="P:sulfur compound biosynthetic process"/>
    <property type="evidence" value="ECO:0007669"/>
    <property type="project" value="UniProtKB-ARBA"/>
</dbReference>
<dbReference type="CDD" id="cd03375">
    <property type="entry name" value="TPP_OGFOR"/>
    <property type="match status" value="1"/>
</dbReference>
<dbReference type="Gene3D" id="3.40.50.970">
    <property type="match status" value="1"/>
</dbReference>
<dbReference type="Gene3D" id="3.40.920.10">
    <property type="entry name" value="Pyruvate-ferredoxin oxidoreductase, PFOR, domain III"/>
    <property type="match status" value="1"/>
</dbReference>
<dbReference type="InterPro" id="IPR051457">
    <property type="entry name" value="2-oxoacid:Fd_oxidoreductase"/>
</dbReference>
<dbReference type="InterPro" id="IPR019752">
    <property type="entry name" value="Pyrv/ketoisovalerate_OxRed_cat"/>
</dbReference>
<dbReference type="InterPro" id="IPR002869">
    <property type="entry name" value="Pyrv_flavodox_OxRed_cen"/>
</dbReference>
<dbReference type="InterPro" id="IPR029061">
    <property type="entry name" value="THDP-binding"/>
</dbReference>
<dbReference type="InterPro" id="IPR011766">
    <property type="entry name" value="TPP_enzyme_TPP-bd"/>
</dbReference>
<dbReference type="PANTHER" id="PTHR48084">
    <property type="entry name" value="2-OXOGLUTARATE OXIDOREDUCTASE SUBUNIT KORB-RELATED"/>
    <property type="match status" value="1"/>
</dbReference>
<dbReference type="PANTHER" id="PTHR48084:SF3">
    <property type="entry name" value="SUBUNIT OF PYRUVATE:FLAVODOXIN OXIDOREDUCTASE"/>
    <property type="match status" value="1"/>
</dbReference>
<dbReference type="Pfam" id="PF01558">
    <property type="entry name" value="POR"/>
    <property type="match status" value="1"/>
</dbReference>
<dbReference type="Pfam" id="PF02775">
    <property type="entry name" value="TPP_enzyme_C"/>
    <property type="match status" value="1"/>
</dbReference>
<dbReference type="SUPFAM" id="SSF53323">
    <property type="entry name" value="Pyruvate-ferredoxin oxidoreductase, PFOR, domain III"/>
    <property type="match status" value="1"/>
</dbReference>
<dbReference type="SUPFAM" id="SSF52518">
    <property type="entry name" value="Thiamin diphosphate-binding fold (THDP-binding)"/>
    <property type="match status" value="1"/>
</dbReference>